<accession>A5A6P3</accession>
<protein>
    <recommendedName>
        <fullName evidence="1">Keratin, type I cuticular Ha3-I</fullName>
    </recommendedName>
    <alternativeName>
        <fullName>Hair keratin, type I Ha3-I</fullName>
    </alternativeName>
    <alternativeName>
        <fullName evidence="1">Keratin-33A</fullName>
        <shortName>K33A</shortName>
    </alternativeName>
</protein>
<gene>
    <name evidence="1" type="primary">KRT33A</name>
    <name evidence="5" type="synonym">KRTHA3A</name>
</gene>
<proteinExistence type="evidence at transcript level"/>
<dbReference type="EMBL" id="AB222171">
    <property type="protein sequence ID" value="BAF62416.1"/>
    <property type="molecule type" value="mRNA"/>
</dbReference>
<dbReference type="RefSeq" id="NP_001104290.1">
    <property type="nucleotide sequence ID" value="NM_001110820.1"/>
</dbReference>
<dbReference type="SMR" id="A5A6P3"/>
<dbReference type="FunCoup" id="A5A6P3">
    <property type="interactions" value="174"/>
</dbReference>
<dbReference type="STRING" id="9598.ENSPTRP00000015604"/>
<dbReference type="PaxDb" id="9598-ENSPTRP00000015604"/>
<dbReference type="GeneID" id="743775"/>
<dbReference type="KEGG" id="ptr:743775"/>
<dbReference type="CTD" id="3883"/>
<dbReference type="eggNOG" id="ENOG502SNBF">
    <property type="taxonomic scope" value="Eukaryota"/>
</dbReference>
<dbReference type="InParanoid" id="A5A6P3"/>
<dbReference type="OrthoDB" id="8115at9604"/>
<dbReference type="Proteomes" id="UP000002277">
    <property type="component" value="Unplaced"/>
</dbReference>
<dbReference type="GO" id="GO:0005856">
    <property type="term" value="C:cytoskeleton"/>
    <property type="evidence" value="ECO:0000318"/>
    <property type="project" value="GO_Central"/>
</dbReference>
<dbReference type="GO" id="GO:0005882">
    <property type="term" value="C:intermediate filament"/>
    <property type="evidence" value="ECO:0007669"/>
    <property type="project" value="UniProtKB-KW"/>
</dbReference>
<dbReference type="GO" id="GO:0005198">
    <property type="term" value="F:structural molecule activity"/>
    <property type="evidence" value="ECO:0007669"/>
    <property type="project" value="InterPro"/>
</dbReference>
<dbReference type="GO" id="GO:0030855">
    <property type="term" value="P:epithelial cell differentiation"/>
    <property type="evidence" value="ECO:0000318"/>
    <property type="project" value="GO_Central"/>
</dbReference>
<dbReference type="GO" id="GO:0045109">
    <property type="term" value="P:intermediate filament organization"/>
    <property type="evidence" value="ECO:0000318"/>
    <property type="project" value="GO_Central"/>
</dbReference>
<dbReference type="FunFam" id="1.20.5.1160:FF:000002">
    <property type="entry name" value="Type I keratin 10"/>
    <property type="match status" value="1"/>
</dbReference>
<dbReference type="FunFam" id="1.20.5.170:FF:000002">
    <property type="entry name" value="Type I keratin KA11"/>
    <property type="match status" value="1"/>
</dbReference>
<dbReference type="FunFam" id="1.20.5.500:FF:000001">
    <property type="entry name" value="Type II keratin 23"/>
    <property type="match status" value="1"/>
</dbReference>
<dbReference type="Gene3D" id="1.20.5.170">
    <property type="match status" value="1"/>
</dbReference>
<dbReference type="Gene3D" id="1.20.5.500">
    <property type="entry name" value="Single helix bin"/>
    <property type="match status" value="1"/>
</dbReference>
<dbReference type="Gene3D" id="1.20.5.1160">
    <property type="entry name" value="Vasodilator-stimulated phosphoprotein"/>
    <property type="match status" value="1"/>
</dbReference>
<dbReference type="InterPro" id="IPR018039">
    <property type="entry name" value="IF_conserved"/>
</dbReference>
<dbReference type="InterPro" id="IPR039008">
    <property type="entry name" value="IF_rod_dom"/>
</dbReference>
<dbReference type="InterPro" id="IPR002957">
    <property type="entry name" value="Keratin_I"/>
</dbReference>
<dbReference type="PANTHER" id="PTHR23239">
    <property type="entry name" value="INTERMEDIATE FILAMENT"/>
    <property type="match status" value="1"/>
</dbReference>
<dbReference type="PANTHER" id="PTHR23239:SF98">
    <property type="entry name" value="KERATIN, TYPE I CUTICULAR HA3-I"/>
    <property type="match status" value="1"/>
</dbReference>
<dbReference type="Pfam" id="PF00038">
    <property type="entry name" value="Filament"/>
    <property type="match status" value="1"/>
</dbReference>
<dbReference type="PRINTS" id="PR01248">
    <property type="entry name" value="TYPE1KERATIN"/>
</dbReference>
<dbReference type="SMART" id="SM01391">
    <property type="entry name" value="Filament"/>
    <property type="match status" value="1"/>
</dbReference>
<dbReference type="SUPFAM" id="SSF64593">
    <property type="entry name" value="Intermediate filament protein, coiled coil region"/>
    <property type="match status" value="2"/>
</dbReference>
<dbReference type="PROSITE" id="PS00226">
    <property type="entry name" value="IF_ROD_1"/>
    <property type="match status" value="1"/>
</dbReference>
<dbReference type="PROSITE" id="PS51842">
    <property type="entry name" value="IF_ROD_2"/>
    <property type="match status" value="1"/>
</dbReference>
<name>KT33A_PANTR</name>
<comment type="miscellaneous">
    <text evidence="4">There are two types of hair/microfibrillar keratin, I (acidic) and II (neutral to basic).</text>
</comment>
<comment type="similarity">
    <text evidence="3">Belongs to the intermediate filament family.</text>
</comment>
<evidence type="ECO:0000250" key="1">
    <source>
        <dbReference type="UniProtKB" id="O76009"/>
    </source>
</evidence>
<evidence type="ECO:0000255" key="2"/>
<evidence type="ECO:0000255" key="3">
    <source>
        <dbReference type="PROSITE-ProRule" id="PRU01188"/>
    </source>
</evidence>
<evidence type="ECO:0000305" key="4"/>
<evidence type="ECO:0000312" key="5">
    <source>
        <dbReference type="EMBL" id="BAF62416.1"/>
    </source>
</evidence>
<organism>
    <name type="scientific">Pan troglodytes</name>
    <name type="common">Chimpanzee</name>
    <dbReference type="NCBI Taxonomy" id="9598"/>
    <lineage>
        <taxon>Eukaryota</taxon>
        <taxon>Metazoa</taxon>
        <taxon>Chordata</taxon>
        <taxon>Craniata</taxon>
        <taxon>Vertebrata</taxon>
        <taxon>Euteleostomi</taxon>
        <taxon>Mammalia</taxon>
        <taxon>Eutheria</taxon>
        <taxon>Euarchontoglires</taxon>
        <taxon>Primates</taxon>
        <taxon>Haplorrhini</taxon>
        <taxon>Catarrhini</taxon>
        <taxon>Hominidae</taxon>
        <taxon>Pan</taxon>
    </lineage>
</organism>
<sequence>MSYSCGLPNLSCRTSCSSRPCVPPSCHGCTLPGACNIPANVSNCNWFCEGSFNGSEKETMQFLNDRLASYLEKVRQLERDNAELENLIRERSQQQEPLVCASYQSYFKTIEELQQKILCTKSENARLVVQIDNAKLASDDFRTKYETELSLRQLVESDINGLRRILDELTLCRSDLEAQVESLKEELLCLKQNHEQEVNTLRCQLGGRLNVEVDAAPAVDLNQVLNETRSQYEALVETNRREVEQWFATQTEELNKQVVSSSEQLQSYQVEIIELRRTVNALEIELQAQHNLRDSLENTLTESEARYSSQLSQVQRLITNVESQLAEIRSDLERQNQEYQVLLDVRARLECEINTYRSLLESEDCKLPSNPCAITNACDKSTGPCISNPCGPRARCGPCNTFGY</sequence>
<keyword id="KW-0175">Coiled coil</keyword>
<keyword id="KW-0403">Intermediate filament</keyword>
<keyword id="KW-0416">Keratin</keyword>
<keyword id="KW-1185">Reference proteome</keyword>
<feature type="chain" id="PRO_0000366206" description="Keratin, type I cuticular Ha3-I">
    <location>
        <begin position="1"/>
        <end position="404"/>
    </location>
</feature>
<feature type="domain" description="IF rod" evidence="3">
    <location>
        <begin position="56"/>
        <end position="367"/>
    </location>
</feature>
<feature type="region of interest" description="Head" evidence="2">
    <location>
        <begin position="1"/>
        <end position="56"/>
    </location>
</feature>
<feature type="region of interest" description="Coil 1A" evidence="2">
    <location>
        <begin position="57"/>
        <end position="91"/>
    </location>
</feature>
<feature type="region of interest" description="Linker 1" evidence="2">
    <location>
        <begin position="92"/>
        <end position="102"/>
    </location>
</feature>
<feature type="region of interest" description="Coil 1B" evidence="2">
    <location>
        <begin position="103"/>
        <end position="203"/>
    </location>
</feature>
<feature type="region of interest" description="Linker 12" evidence="2">
    <location>
        <begin position="204"/>
        <end position="219"/>
    </location>
</feature>
<feature type="region of interest" description="Coil 2" evidence="2">
    <location>
        <begin position="220"/>
        <end position="363"/>
    </location>
</feature>
<feature type="region of interest" description="Tail" evidence="2">
    <location>
        <begin position="364"/>
        <end position="404"/>
    </location>
</feature>
<feature type="site" description="Stutter" evidence="2">
    <location>
        <position position="305"/>
    </location>
</feature>
<reference evidence="5" key="1">
    <citation type="journal article" date="2007" name="Gene">
        <title>Mapping of chimpanzee full-length cDNAs onto the human genome unveils large potential divergence of the transcriptome.</title>
        <authorList>
            <person name="Sakate R."/>
            <person name="Suto Y."/>
            <person name="Imanishi T."/>
            <person name="Tanoue T."/>
            <person name="Hida M."/>
            <person name="Hayasaka I."/>
            <person name="Kusuda J."/>
            <person name="Gojobori T."/>
            <person name="Hashimoto K."/>
            <person name="Hirai M."/>
        </authorList>
    </citation>
    <scope>NUCLEOTIDE SEQUENCE [MRNA]</scope>
    <source>
        <tissue evidence="5">Skin</tissue>
    </source>
</reference>